<organism>
    <name type="scientific">Saccharomyces cerevisiae (strain ATCC 204508 / S288c)</name>
    <name type="common">Baker's yeast</name>
    <dbReference type="NCBI Taxonomy" id="559292"/>
    <lineage>
        <taxon>Eukaryota</taxon>
        <taxon>Fungi</taxon>
        <taxon>Dikarya</taxon>
        <taxon>Ascomycota</taxon>
        <taxon>Saccharomycotina</taxon>
        <taxon>Saccharomycetes</taxon>
        <taxon>Saccharomycetales</taxon>
        <taxon>Saccharomycetaceae</taxon>
        <taxon>Saccharomyces</taxon>
    </lineage>
</organism>
<sequence>MNILRIACRSFHCLRCGPLLNENRGWSSKKIIKLVNKSSLSNKEFTEKVRDGTKDIPEWKKQKMAVRKKLQGQRWNPPKKISQEQMEALRLLKFNFPELTASDLADRFKISPEAVRRILKSNWKRTDEENNNTYERWKRRGERIKEMYQRKEDADFVSNQIVTSRKIILGSNSNSPELIARNVRTFKPFKPNNSTPEKKNTNKLYILKHLGSKQ</sequence>
<evidence type="ECO:0000269" key="1">
    <source>
    </source>
</evidence>
<evidence type="ECO:0000269" key="2">
    <source>
    </source>
</evidence>
<evidence type="ECO:0000269" key="3">
    <source>
    </source>
</evidence>
<evidence type="ECO:0000305" key="4"/>
<gene>
    <name type="primary">RRG9</name>
    <name type="ordered locus">YNL213C</name>
    <name type="ORF">N1323</name>
</gene>
<protein>
    <recommendedName>
        <fullName>Required for respiratory growth protein 9, mitochondrial</fullName>
    </recommendedName>
</protein>
<reference key="1">
    <citation type="journal article" date="1995" name="Yeast">
        <title>The sequence of a 13.5 kb DNA segment from the left arm of yeast chromosome XIV reveals MER1; RAP1; a new putative member of the DNA replication complex and a new putative serine/threonine phosphatase gene.</title>
        <authorList>
            <person name="Coster F."/>
            <person name="van Dyck L."/>
            <person name="Jonniaux J.-L."/>
            <person name="Purnelle B."/>
            <person name="Goffeau A."/>
        </authorList>
    </citation>
    <scope>NUCLEOTIDE SEQUENCE [GENOMIC DNA]</scope>
    <source>
        <strain>ATCC 96604 / S288c / FY1679</strain>
    </source>
</reference>
<reference key="2">
    <citation type="journal article" date="1997" name="Nature">
        <title>The nucleotide sequence of Saccharomyces cerevisiae chromosome XIV and its evolutionary implications.</title>
        <authorList>
            <person name="Philippsen P."/>
            <person name="Kleine K."/>
            <person name="Poehlmann R."/>
            <person name="Duesterhoeft A."/>
            <person name="Hamberg K."/>
            <person name="Hegemann J.H."/>
            <person name="Obermaier B."/>
            <person name="Urrestarazu L.A."/>
            <person name="Aert R."/>
            <person name="Albermann K."/>
            <person name="Altmann R."/>
            <person name="Andre B."/>
            <person name="Baladron V."/>
            <person name="Ballesta J.P.G."/>
            <person name="Becam A.-M."/>
            <person name="Beinhauer J.D."/>
            <person name="Boskovic J."/>
            <person name="Buitrago M.J."/>
            <person name="Bussereau F."/>
            <person name="Coster F."/>
            <person name="Crouzet M."/>
            <person name="D'Angelo M."/>
            <person name="Dal Pero F."/>
            <person name="De Antoni A."/>
            <person name="del Rey F."/>
            <person name="Doignon F."/>
            <person name="Domdey H."/>
            <person name="Dubois E."/>
            <person name="Fiedler T.A."/>
            <person name="Fleig U."/>
            <person name="Floeth M."/>
            <person name="Fritz C."/>
            <person name="Gaillardin C."/>
            <person name="Garcia-Cantalejo J.M."/>
            <person name="Glansdorff N."/>
            <person name="Goffeau A."/>
            <person name="Gueldener U."/>
            <person name="Herbert C.J."/>
            <person name="Heumann K."/>
            <person name="Heuss-Neitzel D."/>
            <person name="Hilbert H."/>
            <person name="Hinni K."/>
            <person name="Iraqui Houssaini I."/>
            <person name="Jacquet M."/>
            <person name="Jimenez A."/>
            <person name="Jonniaux J.-L."/>
            <person name="Karpfinger-Hartl L."/>
            <person name="Lanfranchi G."/>
            <person name="Lepingle A."/>
            <person name="Levesque H."/>
            <person name="Lyck R."/>
            <person name="Maftahi M."/>
            <person name="Mallet L."/>
            <person name="Maurer C.T.C."/>
            <person name="Messenguy F."/>
            <person name="Mewes H.-W."/>
            <person name="Moestl D."/>
            <person name="Nasr F."/>
            <person name="Nicaud J.-M."/>
            <person name="Niedenthal R.K."/>
            <person name="Pandolfo D."/>
            <person name="Pierard A."/>
            <person name="Piravandi E."/>
            <person name="Planta R.J."/>
            <person name="Pohl T.M."/>
            <person name="Purnelle B."/>
            <person name="Rebischung C."/>
            <person name="Remacha M.A."/>
            <person name="Revuelta J.L."/>
            <person name="Rinke M."/>
            <person name="Saiz J.E."/>
            <person name="Sartorello F."/>
            <person name="Scherens B."/>
            <person name="Sen-Gupta M."/>
            <person name="Soler-Mira A."/>
            <person name="Urbanus J.H.M."/>
            <person name="Valle G."/>
            <person name="Van Dyck L."/>
            <person name="Verhasselt P."/>
            <person name="Vierendeels F."/>
            <person name="Vissers S."/>
            <person name="Voet M."/>
            <person name="Volckaert G."/>
            <person name="Wach A."/>
            <person name="Wambutt R."/>
            <person name="Wedler H."/>
            <person name="Zollner A."/>
            <person name="Hani J."/>
        </authorList>
    </citation>
    <scope>NUCLEOTIDE SEQUENCE [LARGE SCALE GENOMIC DNA]</scope>
    <source>
        <strain>ATCC 204508 / S288c</strain>
    </source>
</reference>
<reference key="3">
    <citation type="journal article" date="2014" name="G3 (Bethesda)">
        <title>The reference genome sequence of Saccharomyces cerevisiae: Then and now.</title>
        <authorList>
            <person name="Engel S.R."/>
            <person name="Dietrich F.S."/>
            <person name="Fisk D.G."/>
            <person name="Binkley G."/>
            <person name="Balakrishnan R."/>
            <person name="Costanzo M.C."/>
            <person name="Dwight S.S."/>
            <person name="Hitz B.C."/>
            <person name="Karra K."/>
            <person name="Nash R.S."/>
            <person name="Weng S."/>
            <person name="Wong E.D."/>
            <person name="Lloyd P."/>
            <person name="Skrzypek M.S."/>
            <person name="Miyasato S.R."/>
            <person name="Simison M."/>
            <person name="Cherry J.M."/>
        </authorList>
    </citation>
    <scope>GENOME REANNOTATION</scope>
    <source>
        <strain>ATCC 204508 / S288c</strain>
    </source>
</reference>
<reference key="4">
    <citation type="journal article" date="2003" name="Nature">
        <title>Global analysis of protein expression in yeast.</title>
        <authorList>
            <person name="Ghaemmaghami S."/>
            <person name="Huh W.-K."/>
            <person name="Bower K."/>
            <person name="Howson R.W."/>
            <person name="Belle A."/>
            <person name="Dephoure N."/>
            <person name="O'Shea E.K."/>
            <person name="Weissman J.S."/>
        </authorList>
    </citation>
    <scope>LEVEL OF PROTEIN EXPRESSION [LARGE SCALE ANALYSIS]</scope>
</reference>
<reference key="5">
    <citation type="journal article" date="2006" name="J. Proteome Res.">
        <title>Toward the complete yeast mitochondrial proteome: multidimensional separation techniques for mitochondrial proteomics.</title>
        <authorList>
            <person name="Reinders J."/>
            <person name="Zahedi R.P."/>
            <person name="Pfanner N."/>
            <person name="Meisinger C."/>
            <person name="Sickmann A."/>
        </authorList>
    </citation>
    <scope>SUBCELLULAR LOCATION [LARGE SCALE ANALYSIS]</scope>
    <scope>IDENTIFICATION BY MASS SPECTROMETRY</scope>
</reference>
<reference key="6">
    <citation type="journal article" date="2009" name="Genome Biol.">
        <title>Genome-wide deletion mutant analysis reveals genes required for respiratory growth, mitochondrial genome maintenance and mitochondrial protein synthesis in Saccharomyces cerevisiae.</title>
        <authorList>
            <person name="Merz S."/>
            <person name="Westermann B."/>
        </authorList>
    </citation>
    <scope>FUNCTION</scope>
</reference>
<proteinExistence type="evidence at protein level"/>
<name>RRG9_YEAST</name>
<keyword id="KW-0496">Mitochondrion</keyword>
<keyword id="KW-1185">Reference proteome</keyword>
<keyword id="KW-0809">Transit peptide</keyword>
<comment type="function">
    <text evidence="3">Required for respiratory activity and maintenance and expression of the mitochondrial genome.</text>
</comment>
<comment type="subcellular location">
    <subcellularLocation>
        <location evidence="2">Mitochondrion</location>
    </subcellularLocation>
</comment>
<comment type="miscellaneous">
    <text evidence="1">Present with 1160 molecules/cell in log phase SD medium.</text>
</comment>
<comment type="similarity">
    <text evidence="4">Belongs to the RRG9 family.</text>
</comment>
<dbReference type="EMBL" id="X78898">
    <property type="protein sequence ID" value="CAA55495.1"/>
    <property type="molecule type" value="Genomic_DNA"/>
</dbReference>
<dbReference type="EMBL" id="Z71489">
    <property type="protein sequence ID" value="CAA96115.1"/>
    <property type="molecule type" value="Genomic_DNA"/>
</dbReference>
<dbReference type="EMBL" id="BK006947">
    <property type="protein sequence ID" value="DAA10343.1"/>
    <property type="molecule type" value="Genomic_DNA"/>
</dbReference>
<dbReference type="PIR" id="S50718">
    <property type="entry name" value="S50718"/>
</dbReference>
<dbReference type="RefSeq" id="NP_014186.1">
    <property type="nucleotide sequence ID" value="NM_001183051.1"/>
</dbReference>
<dbReference type="SMR" id="P40156"/>
<dbReference type="BioGRID" id="35623">
    <property type="interactions" value="176"/>
</dbReference>
<dbReference type="DIP" id="DIP-6462N"/>
<dbReference type="FunCoup" id="P40156">
    <property type="interactions" value="52"/>
</dbReference>
<dbReference type="IntAct" id="P40156">
    <property type="interactions" value="9"/>
</dbReference>
<dbReference type="STRING" id="4932.YNL213C"/>
<dbReference type="PaxDb" id="4932-YNL213C"/>
<dbReference type="PeptideAtlas" id="P40156"/>
<dbReference type="EnsemblFungi" id="YNL213C_mRNA">
    <property type="protein sequence ID" value="YNL213C"/>
    <property type="gene ID" value="YNL213C"/>
</dbReference>
<dbReference type="GeneID" id="855508"/>
<dbReference type="KEGG" id="sce:YNL213C"/>
<dbReference type="AGR" id="SGD:S000005157"/>
<dbReference type="SGD" id="S000005157">
    <property type="gene designation" value="RRG9"/>
</dbReference>
<dbReference type="VEuPathDB" id="FungiDB:YNL213C"/>
<dbReference type="eggNOG" id="ENOG502S7IA">
    <property type="taxonomic scope" value="Eukaryota"/>
</dbReference>
<dbReference type="GeneTree" id="ENSGT00390000014472"/>
<dbReference type="HOGENOM" id="CLU_100293_0_0_1"/>
<dbReference type="InParanoid" id="P40156"/>
<dbReference type="OMA" id="WREDTKI"/>
<dbReference type="OrthoDB" id="5578174at2759"/>
<dbReference type="BioCyc" id="YEAST:G3O-33219-MONOMER"/>
<dbReference type="BioGRID-ORCS" id="855508">
    <property type="hits" value="1 hit in 10 CRISPR screens"/>
</dbReference>
<dbReference type="PRO" id="PR:P40156"/>
<dbReference type="Proteomes" id="UP000002311">
    <property type="component" value="Chromosome XIV"/>
</dbReference>
<dbReference type="RNAct" id="P40156">
    <property type="molecule type" value="protein"/>
</dbReference>
<dbReference type="GO" id="GO:0005739">
    <property type="term" value="C:mitochondrion"/>
    <property type="evidence" value="ECO:0007005"/>
    <property type="project" value="SGD"/>
</dbReference>
<dbReference type="GO" id="GO:0005634">
    <property type="term" value="C:nucleus"/>
    <property type="evidence" value="ECO:0000318"/>
    <property type="project" value="GO_Central"/>
</dbReference>
<dbReference type="GO" id="GO:0000002">
    <property type="term" value="P:mitochondrial genome maintenance"/>
    <property type="evidence" value="ECO:0000315"/>
    <property type="project" value="SGD"/>
</dbReference>
<dbReference type="GO" id="GO:0007005">
    <property type="term" value="P:mitochondrion organization"/>
    <property type="evidence" value="ECO:0000315"/>
    <property type="project" value="SGD"/>
</dbReference>
<dbReference type="InterPro" id="IPR010487">
    <property type="entry name" value="NGRN/Rrg9"/>
</dbReference>
<dbReference type="PANTHER" id="PTHR13475">
    <property type="entry name" value="NEUGRIN"/>
    <property type="match status" value="1"/>
</dbReference>
<dbReference type="PANTHER" id="PTHR13475:SF3">
    <property type="entry name" value="NEUGRIN"/>
    <property type="match status" value="1"/>
</dbReference>
<dbReference type="Pfam" id="PF06413">
    <property type="entry name" value="Neugrin"/>
    <property type="match status" value="1"/>
</dbReference>
<accession>P40156</accession>
<accession>D6W0X7</accession>
<feature type="transit peptide" description="Mitochondrion" evidence="4">
    <location>
        <begin position="1"/>
        <end position="18"/>
    </location>
</feature>
<feature type="chain" id="PRO_0000203389" description="Required for respiratory growth protein 9, mitochondrial">
    <location>
        <begin position="19"/>
        <end position="214"/>
    </location>
</feature>